<proteinExistence type="evidence at protein level"/>
<sequence length="177" mass="20348">MAGSRLETVGSVFSRTRDLMRAGVLKEKPLWYDIYKAFPPLREPVFRRPRLRYGKAKADIQDIFYQEDQIRAKFFATYGSGQKAFDLFNPNFKSTCQRFVEKYTELQNLGETDEEKLFVETGKALLAEGIILRRVREARTVSVRLQASSEGHEPQEDDDLAQRGQVKQEPETAPSPP</sequence>
<dbReference type="EMBL" id="AK014375">
    <property type="protein sequence ID" value="BAB29307.2"/>
    <property type="molecule type" value="mRNA"/>
</dbReference>
<dbReference type="EMBL" id="BC019980">
    <property type="protein sequence ID" value="AAH19980.1"/>
    <property type="molecule type" value="mRNA"/>
</dbReference>
<dbReference type="CCDS" id="CCDS25227.1"/>
<dbReference type="RefSeq" id="NP_001278199.1">
    <property type="nucleotide sequence ID" value="NM_001291270.1"/>
</dbReference>
<dbReference type="RefSeq" id="NP_001278200.1">
    <property type="nucleotide sequence ID" value="NM_001291271.1"/>
</dbReference>
<dbReference type="RefSeq" id="NP_001278201.1">
    <property type="nucleotide sequence ID" value="NM_001291272.1"/>
</dbReference>
<dbReference type="RefSeq" id="NP_001278202.1">
    <property type="nucleotide sequence ID" value="NM_001291273.1"/>
</dbReference>
<dbReference type="RefSeq" id="NP_077136.2">
    <property type="nucleotide sequence ID" value="NM_024174.6"/>
</dbReference>
<dbReference type="PDB" id="7PNT">
    <property type="method" value="EM"/>
    <property type="resolution" value="3.19 A"/>
    <property type="chains" value="S=1-177"/>
</dbReference>
<dbReference type="PDB" id="7PNU">
    <property type="method" value="EM"/>
    <property type="resolution" value="3.06 A"/>
    <property type="chains" value="S=1-177"/>
</dbReference>
<dbReference type="PDB" id="7PNV">
    <property type="method" value="EM"/>
    <property type="resolution" value="3.06 A"/>
    <property type="chains" value="S=1-177"/>
</dbReference>
<dbReference type="PDB" id="7PNW">
    <property type="method" value="EM"/>
    <property type="resolution" value="3.09 A"/>
    <property type="chains" value="S=1-177"/>
</dbReference>
<dbReference type="PDBsum" id="7PNT"/>
<dbReference type="PDBsum" id="7PNU"/>
<dbReference type="PDBsum" id="7PNV"/>
<dbReference type="PDBsum" id="7PNW"/>
<dbReference type="EMDB" id="EMD-13551"/>
<dbReference type="EMDB" id="EMD-13552"/>
<dbReference type="EMDB" id="EMD-13553"/>
<dbReference type="EMDB" id="EMD-13554"/>
<dbReference type="SMR" id="Q8VE22"/>
<dbReference type="BioGRID" id="211092">
    <property type="interactions" value="16"/>
</dbReference>
<dbReference type="ComplexPortal" id="CPX-5301">
    <property type="entry name" value="28S mitochondrial small ribosomal subunit"/>
</dbReference>
<dbReference type="FunCoup" id="Q8VE22">
    <property type="interactions" value="1475"/>
</dbReference>
<dbReference type="STRING" id="10090.ENSMUSP00000024486"/>
<dbReference type="iPTMnet" id="Q8VE22"/>
<dbReference type="PhosphoSitePlus" id="Q8VE22"/>
<dbReference type="jPOST" id="Q8VE22"/>
<dbReference type="PaxDb" id="10090-ENSMUSP00000024486"/>
<dbReference type="PeptideAtlas" id="Q8VE22"/>
<dbReference type="ProteomicsDB" id="260942"/>
<dbReference type="Pumba" id="Q8VE22"/>
<dbReference type="Antibodypedia" id="18338">
    <property type="antibodies" value="126 antibodies from 20 providers"/>
</dbReference>
<dbReference type="Ensembl" id="ENSMUST00000024486.14">
    <property type="protein sequence ID" value="ENSMUSP00000024486.8"/>
    <property type="gene ID" value="ENSMUSG00000023723.18"/>
</dbReference>
<dbReference type="GeneID" id="64656"/>
<dbReference type="KEGG" id="mmu:64656"/>
<dbReference type="UCSC" id="uc007kvi.2">
    <property type="organism name" value="mouse"/>
</dbReference>
<dbReference type="AGR" id="MGI:1928138"/>
<dbReference type="CTD" id="51649"/>
<dbReference type="MGI" id="MGI:1928138">
    <property type="gene designation" value="Mrps23"/>
</dbReference>
<dbReference type="VEuPathDB" id="HostDB:ENSMUSG00000023723"/>
<dbReference type="eggNOG" id="ENOG502RZIC">
    <property type="taxonomic scope" value="Eukaryota"/>
</dbReference>
<dbReference type="GeneTree" id="ENSGT00390000009030"/>
<dbReference type="InParanoid" id="Q8VE22"/>
<dbReference type="OMA" id="TEDKPIW"/>
<dbReference type="OrthoDB" id="10012356at2759"/>
<dbReference type="PhylomeDB" id="Q8VE22"/>
<dbReference type="TreeFam" id="TF106116"/>
<dbReference type="Reactome" id="R-MMU-5389840">
    <property type="pathway name" value="Mitochondrial translation elongation"/>
</dbReference>
<dbReference type="Reactome" id="R-MMU-5419276">
    <property type="pathway name" value="Mitochondrial translation termination"/>
</dbReference>
<dbReference type="BioGRID-ORCS" id="64656">
    <property type="hits" value="12 hits in 79 CRISPR screens"/>
</dbReference>
<dbReference type="PRO" id="PR:Q8VE22"/>
<dbReference type="Proteomes" id="UP000000589">
    <property type="component" value="Chromosome 11"/>
</dbReference>
<dbReference type="RNAct" id="Q8VE22">
    <property type="molecule type" value="protein"/>
</dbReference>
<dbReference type="Bgee" id="ENSMUSG00000023723">
    <property type="expression patterns" value="Expressed in embryonic brain and 74 other cell types or tissues"/>
</dbReference>
<dbReference type="ExpressionAtlas" id="Q8VE22">
    <property type="expression patterns" value="baseline and differential"/>
</dbReference>
<dbReference type="GO" id="GO:0005743">
    <property type="term" value="C:mitochondrial inner membrane"/>
    <property type="evidence" value="ECO:0000303"/>
    <property type="project" value="ComplexPortal"/>
</dbReference>
<dbReference type="GO" id="GO:0005763">
    <property type="term" value="C:mitochondrial small ribosomal subunit"/>
    <property type="evidence" value="ECO:0000250"/>
    <property type="project" value="UniProtKB"/>
</dbReference>
<dbReference type="GO" id="GO:0005739">
    <property type="term" value="C:mitochondrion"/>
    <property type="evidence" value="ECO:0007005"/>
    <property type="project" value="MGI"/>
</dbReference>
<dbReference type="GO" id="GO:0031965">
    <property type="term" value="C:nuclear membrane"/>
    <property type="evidence" value="ECO:0007669"/>
    <property type="project" value="Ensembl"/>
</dbReference>
<dbReference type="GO" id="GO:0003735">
    <property type="term" value="F:structural constituent of ribosome"/>
    <property type="evidence" value="ECO:0000250"/>
    <property type="project" value="MGI"/>
</dbReference>
<dbReference type="GO" id="GO:0032543">
    <property type="term" value="P:mitochondrial translation"/>
    <property type="evidence" value="ECO:0000303"/>
    <property type="project" value="ComplexPortal"/>
</dbReference>
<dbReference type="CDD" id="cd23701">
    <property type="entry name" value="At1g26750"/>
    <property type="match status" value="1"/>
</dbReference>
<dbReference type="InterPro" id="IPR023611">
    <property type="entry name" value="Ribosomal_mS23_dom"/>
</dbReference>
<dbReference type="InterPro" id="IPR019520">
    <property type="entry name" value="Ribosomal_mS23_met"/>
</dbReference>
<dbReference type="PANTHER" id="PTHR15925">
    <property type="entry name" value="MITOCHONDRIAL RIBOSOMAL PROTEIN S23"/>
    <property type="match status" value="1"/>
</dbReference>
<dbReference type="PANTHER" id="PTHR15925:SF2">
    <property type="entry name" value="SMALL RIBOSOMAL SUBUNIT PROTEIN MS23"/>
    <property type="match status" value="1"/>
</dbReference>
<dbReference type="Pfam" id="PF10484">
    <property type="entry name" value="MRP-S23"/>
    <property type="match status" value="1"/>
</dbReference>
<name>RT23_MOUSE</name>
<reference evidence="6" key="1">
    <citation type="journal article" date="2005" name="Science">
        <title>The transcriptional landscape of the mammalian genome.</title>
        <authorList>
            <person name="Carninci P."/>
            <person name="Kasukawa T."/>
            <person name="Katayama S."/>
            <person name="Gough J."/>
            <person name="Frith M.C."/>
            <person name="Maeda N."/>
            <person name="Oyama R."/>
            <person name="Ravasi T."/>
            <person name="Lenhard B."/>
            <person name="Wells C."/>
            <person name="Kodzius R."/>
            <person name="Shimokawa K."/>
            <person name="Bajic V.B."/>
            <person name="Brenner S.E."/>
            <person name="Batalov S."/>
            <person name="Forrest A.R."/>
            <person name="Zavolan M."/>
            <person name="Davis M.J."/>
            <person name="Wilming L.G."/>
            <person name="Aidinis V."/>
            <person name="Allen J.E."/>
            <person name="Ambesi-Impiombato A."/>
            <person name="Apweiler R."/>
            <person name="Aturaliya R.N."/>
            <person name="Bailey T.L."/>
            <person name="Bansal M."/>
            <person name="Baxter L."/>
            <person name="Beisel K.W."/>
            <person name="Bersano T."/>
            <person name="Bono H."/>
            <person name="Chalk A.M."/>
            <person name="Chiu K.P."/>
            <person name="Choudhary V."/>
            <person name="Christoffels A."/>
            <person name="Clutterbuck D.R."/>
            <person name="Crowe M.L."/>
            <person name="Dalla E."/>
            <person name="Dalrymple B.P."/>
            <person name="de Bono B."/>
            <person name="Della Gatta G."/>
            <person name="di Bernardo D."/>
            <person name="Down T."/>
            <person name="Engstrom P."/>
            <person name="Fagiolini M."/>
            <person name="Faulkner G."/>
            <person name="Fletcher C.F."/>
            <person name="Fukushima T."/>
            <person name="Furuno M."/>
            <person name="Futaki S."/>
            <person name="Gariboldi M."/>
            <person name="Georgii-Hemming P."/>
            <person name="Gingeras T.R."/>
            <person name="Gojobori T."/>
            <person name="Green R.E."/>
            <person name="Gustincich S."/>
            <person name="Harbers M."/>
            <person name="Hayashi Y."/>
            <person name="Hensch T.K."/>
            <person name="Hirokawa N."/>
            <person name="Hill D."/>
            <person name="Huminiecki L."/>
            <person name="Iacono M."/>
            <person name="Ikeo K."/>
            <person name="Iwama A."/>
            <person name="Ishikawa T."/>
            <person name="Jakt M."/>
            <person name="Kanapin A."/>
            <person name="Katoh M."/>
            <person name="Kawasawa Y."/>
            <person name="Kelso J."/>
            <person name="Kitamura H."/>
            <person name="Kitano H."/>
            <person name="Kollias G."/>
            <person name="Krishnan S.P."/>
            <person name="Kruger A."/>
            <person name="Kummerfeld S.K."/>
            <person name="Kurochkin I.V."/>
            <person name="Lareau L.F."/>
            <person name="Lazarevic D."/>
            <person name="Lipovich L."/>
            <person name="Liu J."/>
            <person name="Liuni S."/>
            <person name="McWilliam S."/>
            <person name="Madan Babu M."/>
            <person name="Madera M."/>
            <person name="Marchionni L."/>
            <person name="Matsuda H."/>
            <person name="Matsuzawa S."/>
            <person name="Miki H."/>
            <person name="Mignone F."/>
            <person name="Miyake S."/>
            <person name="Morris K."/>
            <person name="Mottagui-Tabar S."/>
            <person name="Mulder N."/>
            <person name="Nakano N."/>
            <person name="Nakauchi H."/>
            <person name="Ng P."/>
            <person name="Nilsson R."/>
            <person name="Nishiguchi S."/>
            <person name="Nishikawa S."/>
            <person name="Nori F."/>
            <person name="Ohara O."/>
            <person name="Okazaki Y."/>
            <person name="Orlando V."/>
            <person name="Pang K.C."/>
            <person name="Pavan W.J."/>
            <person name="Pavesi G."/>
            <person name="Pesole G."/>
            <person name="Petrovsky N."/>
            <person name="Piazza S."/>
            <person name="Reed J."/>
            <person name="Reid J.F."/>
            <person name="Ring B.Z."/>
            <person name="Ringwald M."/>
            <person name="Rost B."/>
            <person name="Ruan Y."/>
            <person name="Salzberg S.L."/>
            <person name="Sandelin A."/>
            <person name="Schneider C."/>
            <person name="Schoenbach C."/>
            <person name="Sekiguchi K."/>
            <person name="Semple C.A."/>
            <person name="Seno S."/>
            <person name="Sessa L."/>
            <person name="Sheng Y."/>
            <person name="Shibata Y."/>
            <person name="Shimada H."/>
            <person name="Shimada K."/>
            <person name="Silva D."/>
            <person name="Sinclair B."/>
            <person name="Sperling S."/>
            <person name="Stupka E."/>
            <person name="Sugiura K."/>
            <person name="Sultana R."/>
            <person name="Takenaka Y."/>
            <person name="Taki K."/>
            <person name="Tammoja K."/>
            <person name="Tan S.L."/>
            <person name="Tang S."/>
            <person name="Taylor M.S."/>
            <person name="Tegner J."/>
            <person name="Teichmann S.A."/>
            <person name="Ueda H.R."/>
            <person name="van Nimwegen E."/>
            <person name="Verardo R."/>
            <person name="Wei C.L."/>
            <person name="Yagi K."/>
            <person name="Yamanishi H."/>
            <person name="Zabarovsky E."/>
            <person name="Zhu S."/>
            <person name="Zimmer A."/>
            <person name="Hide W."/>
            <person name="Bult C."/>
            <person name="Grimmond S.M."/>
            <person name="Teasdale R.D."/>
            <person name="Liu E.T."/>
            <person name="Brusic V."/>
            <person name="Quackenbush J."/>
            <person name="Wahlestedt C."/>
            <person name="Mattick J.S."/>
            <person name="Hume D.A."/>
            <person name="Kai C."/>
            <person name="Sasaki D."/>
            <person name="Tomaru Y."/>
            <person name="Fukuda S."/>
            <person name="Kanamori-Katayama M."/>
            <person name="Suzuki M."/>
            <person name="Aoki J."/>
            <person name="Arakawa T."/>
            <person name="Iida J."/>
            <person name="Imamura K."/>
            <person name="Itoh M."/>
            <person name="Kato T."/>
            <person name="Kawaji H."/>
            <person name="Kawagashira N."/>
            <person name="Kawashima T."/>
            <person name="Kojima M."/>
            <person name="Kondo S."/>
            <person name="Konno H."/>
            <person name="Nakano K."/>
            <person name="Ninomiya N."/>
            <person name="Nishio T."/>
            <person name="Okada M."/>
            <person name="Plessy C."/>
            <person name="Shibata K."/>
            <person name="Shiraki T."/>
            <person name="Suzuki S."/>
            <person name="Tagami M."/>
            <person name="Waki K."/>
            <person name="Watahiki A."/>
            <person name="Okamura-Oho Y."/>
            <person name="Suzuki H."/>
            <person name="Kawai J."/>
            <person name="Hayashizaki Y."/>
        </authorList>
    </citation>
    <scope>NUCLEOTIDE SEQUENCE [LARGE SCALE MRNA]</scope>
    <source>
        <strain evidence="5">C57BL/6J</strain>
        <tissue evidence="5">Head</tissue>
    </source>
</reference>
<reference evidence="6" key="2">
    <citation type="journal article" date="2004" name="Genome Res.">
        <title>The status, quality, and expansion of the NIH full-length cDNA project: the Mammalian Gene Collection (MGC).</title>
        <authorList>
            <consortium name="The MGC Project Team"/>
        </authorList>
    </citation>
    <scope>NUCLEOTIDE SEQUENCE [LARGE SCALE MRNA]</scope>
    <source>
        <tissue evidence="4">Mammary gland</tissue>
    </source>
</reference>
<reference key="3">
    <citation type="journal article" date="2010" name="Cell">
        <title>A tissue-specific atlas of mouse protein phosphorylation and expression.</title>
        <authorList>
            <person name="Huttlin E.L."/>
            <person name="Jedrychowski M.P."/>
            <person name="Elias J.E."/>
            <person name="Goswami T."/>
            <person name="Rad R."/>
            <person name="Beausoleil S.A."/>
            <person name="Villen J."/>
            <person name="Haas W."/>
            <person name="Sowa M.E."/>
            <person name="Gygi S.P."/>
        </authorList>
    </citation>
    <scope>IDENTIFICATION BY MASS SPECTROMETRY [LARGE SCALE ANALYSIS]</scope>
    <source>
        <tissue>Brain</tissue>
        <tissue>Brown adipose tissue</tissue>
        <tissue>Heart</tissue>
        <tissue>Kidney</tissue>
        <tissue>Liver</tissue>
        <tissue>Lung</tissue>
        <tissue>Pancreas</tissue>
        <tissue>Spleen</tissue>
        <tissue>Testis</tissue>
    </source>
</reference>
<reference key="4">
    <citation type="journal article" date="2013" name="Mol. Cell">
        <title>SIRT5-mediated lysine desuccinylation impacts diverse metabolic pathways.</title>
        <authorList>
            <person name="Park J."/>
            <person name="Chen Y."/>
            <person name="Tishkoff D.X."/>
            <person name="Peng C."/>
            <person name="Tan M."/>
            <person name="Dai L."/>
            <person name="Xie Z."/>
            <person name="Zhang Y."/>
            <person name="Zwaans B.M."/>
            <person name="Skinner M.E."/>
            <person name="Lombard D.B."/>
            <person name="Zhao Y."/>
        </authorList>
    </citation>
    <scope>SUCCINYLATION [LARGE SCALE ANALYSIS] AT LYS-83</scope>
    <scope>IDENTIFICATION BY MASS SPECTROMETRY [LARGE SCALE ANALYSIS]</scope>
    <source>
        <tissue>Liver</tissue>
    </source>
</reference>
<gene>
    <name evidence="7" type="primary">Mrps23</name>
</gene>
<protein>
    <recommendedName>
        <fullName evidence="6">Small ribosomal subunit protein mS23</fullName>
    </recommendedName>
    <alternativeName>
        <fullName>28S ribosomal protein S23, mitochondrial</fullName>
        <shortName>MRP-S23</shortName>
        <shortName>S23mt</shortName>
    </alternativeName>
</protein>
<evidence type="ECO:0000250" key="1">
    <source>
        <dbReference type="UniProtKB" id="Q2NL27"/>
    </source>
</evidence>
<evidence type="ECO:0000250" key="2">
    <source>
        <dbReference type="UniProtKB" id="Q9Y3D9"/>
    </source>
</evidence>
<evidence type="ECO:0000256" key="3">
    <source>
        <dbReference type="SAM" id="MobiDB-lite"/>
    </source>
</evidence>
<evidence type="ECO:0000269" key="4">
    <source>
    </source>
</evidence>
<evidence type="ECO:0000269" key="5">
    <source>
    </source>
</evidence>
<evidence type="ECO:0000305" key="6"/>
<evidence type="ECO:0000312" key="7">
    <source>
        <dbReference type="MGI" id="MGI:1928138"/>
    </source>
</evidence>
<evidence type="ECO:0007744" key="8">
    <source>
    </source>
</evidence>
<keyword id="KW-0002">3D-structure</keyword>
<keyword id="KW-0007">Acetylation</keyword>
<keyword id="KW-0496">Mitochondrion</keyword>
<keyword id="KW-1185">Reference proteome</keyword>
<keyword id="KW-0687">Ribonucleoprotein</keyword>
<keyword id="KW-0689">Ribosomal protein</keyword>
<feature type="initiator methionine" description="Removed" evidence="2">
    <location>
        <position position="1"/>
    </location>
</feature>
<feature type="chain" id="PRO_0000087706" description="Small ribosomal subunit protein mS23">
    <location>
        <begin position="2"/>
        <end position="177"/>
    </location>
</feature>
<feature type="region of interest" description="Disordered" evidence="3">
    <location>
        <begin position="145"/>
        <end position="177"/>
    </location>
</feature>
<feature type="modified residue" description="N-acetylalanine" evidence="2">
    <location>
        <position position="2"/>
    </location>
</feature>
<feature type="modified residue" description="N6-succinyllysine" evidence="8">
    <location>
        <position position="83"/>
    </location>
</feature>
<feature type="modified residue" description="N6-acetyllysine" evidence="2">
    <location>
        <position position="102"/>
    </location>
</feature>
<accession>Q8VE22</accession>
<accession>Q9CXH1</accession>
<comment type="subunit">
    <text evidence="1">Component of the mitochondrial ribosome small subunit (28S) which comprises a 12S rRNA and about 30 distinct proteins.</text>
</comment>
<comment type="subcellular location">
    <subcellularLocation>
        <location evidence="1">Mitochondrion</location>
    </subcellularLocation>
</comment>
<comment type="similarity">
    <text evidence="6">Belongs to the mitochondrion-specific ribosomal protein mS23 family.</text>
</comment>
<organism>
    <name type="scientific">Mus musculus</name>
    <name type="common">Mouse</name>
    <dbReference type="NCBI Taxonomy" id="10090"/>
    <lineage>
        <taxon>Eukaryota</taxon>
        <taxon>Metazoa</taxon>
        <taxon>Chordata</taxon>
        <taxon>Craniata</taxon>
        <taxon>Vertebrata</taxon>
        <taxon>Euteleostomi</taxon>
        <taxon>Mammalia</taxon>
        <taxon>Eutheria</taxon>
        <taxon>Euarchontoglires</taxon>
        <taxon>Glires</taxon>
        <taxon>Rodentia</taxon>
        <taxon>Myomorpha</taxon>
        <taxon>Muroidea</taxon>
        <taxon>Muridae</taxon>
        <taxon>Murinae</taxon>
        <taxon>Mus</taxon>
        <taxon>Mus</taxon>
    </lineage>
</organism>